<gene>
    <name type="ORF">SPAC22G7.01c</name>
    <name type="ORF">SPAPJ696.03c</name>
</gene>
<accession>Q09795</accession>
<accession>Q9URW5</accession>
<evidence type="ECO:0000255" key="1"/>
<evidence type="ECO:0000305" key="2"/>
<proteinExistence type="inferred from homology"/>
<name>YAA1_SCHPO</name>
<reference key="1">
    <citation type="journal article" date="2002" name="Nature">
        <title>The genome sequence of Schizosaccharomyces pombe.</title>
        <authorList>
            <person name="Wood V."/>
            <person name="Gwilliam R."/>
            <person name="Rajandream M.A."/>
            <person name="Lyne M.H."/>
            <person name="Lyne R."/>
            <person name="Stewart A."/>
            <person name="Sgouros J.G."/>
            <person name="Peat N."/>
            <person name="Hayles J."/>
            <person name="Baker S.G."/>
            <person name="Basham D."/>
            <person name="Bowman S."/>
            <person name="Brooks K."/>
            <person name="Brown D."/>
            <person name="Brown S."/>
            <person name="Chillingworth T."/>
            <person name="Churcher C.M."/>
            <person name="Collins M."/>
            <person name="Connor R."/>
            <person name="Cronin A."/>
            <person name="Davis P."/>
            <person name="Feltwell T."/>
            <person name="Fraser A."/>
            <person name="Gentles S."/>
            <person name="Goble A."/>
            <person name="Hamlin N."/>
            <person name="Harris D.E."/>
            <person name="Hidalgo J."/>
            <person name="Hodgson G."/>
            <person name="Holroyd S."/>
            <person name="Hornsby T."/>
            <person name="Howarth S."/>
            <person name="Huckle E.J."/>
            <person name="Hunt S."/>
            <person name="Jagels K."/>
            <person name="James K.D."/>
            <person name="Jones L."/>
            <person name="Jones M."/>
            <person name="Leather S."/>
            <person name="McDonald S."/>
            <person name="McLean J."/>
            <person name="Mooney P."/>
            <person name="Moule S."/>
            <person name="Mungall K.L."/>
            <person name="Murphy L.D."/>
            <person name="Niblett D."/>
            <person name="Odell C."/>
            <person name="Oliver K."/>
            <person name="O'Neil S."/>
            <person name="Pearson D."/>
            <person name="Quail M.A."/>
            <person name="Rabbinowitsch E."/>
            <person name="Rutherford K.M."/>
            <person name="Rutter S."/>
            <person name="Saunders D."/>
            <person name="Seeger K."/>
            <person name="Sharp S."/>
            <person name="Skelton J."/>
            <person name="Simmonds M.N."/>
            <person name="Squares R."/>
            <person name="Squares S."/>
            <person name="Stevens K."/>
            <person name="Taylor K."/>
            <person name="Taylor R.G."/>
            <person name="Tivey A."/>
            <person name="Walsh S.V."/>
            <person name="Warren T."/>
            <person name="Whitehead S."/>
            <person name="Woodward J.R."/>
            <person name="Volckaert G."/>
            <person name="Aert R."/>
            <person name="Robben J."/>
            <person name="Grymonprez B."/>
            <person name="Weltjens I."/>
            <person name="Vanstreels E."/>
            <person name="Rieger M."/>
            <person name="Schaefer M."/>
            <person name="Mueller-Auer S."/>
            <person name="Gabel C."/>
            <person name="Fuchs M."/>
            <person name="Duesterhoeft A."/>
            <person name="Fritzc C."/>
            <person name="Holzer E."/>
            <person name="Moestl D."/>
            <person name="Hilbert H."/>
            <person name="Borzym K."/>
            <person name="Langer I."/>
            <person name="Beck A."/>
            <person name="Lehrach H."/>
            <person name="Reinhardt R."/>
            <person name="Pohl T.M."/>
            <person name="Eger P."/>
            <person name="Zimmermann W."/>
            <person name="Wedler H."/>
            <person name="Wambutt R."/>
            <person name="Purnelle B."/>
            <person name="Goffeau A."/>
            <person name="Cadieu E."/>
            <person name="Dreano S."/>
            <person name="Gloux S."/>
            <person name="Lelaure V."/>
            <person name="Mottier S."/>
            <person name="Galibert F."/>
            <person name="Aves S.J."/>
            <person name="Xiang Z."/>
            <person name="Hunt C."/>
            <person name="Moore K."/>
            <person name="Hurst S.M."/>
            <person name="Lucas M."/>
            <person name="Rochet M."/>
            <person name="Gaillardin C."/>
            <person name="Tallada V.A."/>
            <person name="Garzon A."/>
            <person name="Thode G."/>
            <person name="Daga R.R."/>
            <person name="Cruzado L."/>
            <person name="Jimenez J."/>
            <person name="Sanchez M."/>
            <person name="del Rey F."/>
            <person name="Benito J."/>
            <person name="Dominguez A."/>
            <person name="Revuelta J.L."/>
            <person name="Moreno S."/>
            <person name="Armstrong J."/>
            <person name="Forsburg S.L."/>
            <person name="Cerutti L."/>
            <person name="Lowe T."/>
            <person name="McCombie W.R."/>
            <person name="Paulsen I."/>
            <person name="Potashkin J."/>
            <person name="Shpakovski G.V."/>
            <person name="Ussery D."/>
            <person name="Barrell B.G."/>
            <person name="Nurse P."/>
        </authorList>
    </citation>
    <scope>NUCLEOTIDE SEQUENCE [LARGE SCALE GENOMIC DNA]</scope>
    <source>
        <strain>972 / ATCC 24843</strain>
    </source>
</reference>
<keyword id="KW-0378">Hydrolase</keyword>
<keyword id="KW-0464">Manganese</keyword>
<keyword id="KW-0479">Metal-binding</keyword>
<keyword id="KW-1185">Reference proteome</keyword>
<sequence length="598" mass="66681">MVVHTGNRLNKLRELMKERGYTLYVVPSEDAHSSEYTCDADARRAFISGFDGSAGCAVIGETSAALFTDGRYFNQASQQLDENWTLMKQGFTGVPTWEEYCTQMTKCNEKVGIDSSLITFPAAKALRESLFLKSGAVLVGDHDNLVDIVWGASRPKEPLEKLIVQEIKYAGLGVDEKLHNLREAMKEQKIEAFVVSMLDEVAWLYNLRGADVPYNPVFFAYSLVTLDEAFLYVDERKVTPEVSKHLDGFVKILPYDRVFSDAKNSNLTRIGISSKTSWCIATSFGETKVMPILSPISQAKGIKNDAELKGMKECHIRDGCALVEYFAWLDEYLNSGNKINEFDAATKLEQFRRKNNLFMGLSFETISSTGPNGAVIHYSPPATGSAIIDPTKIYLCDSGAQYKDGTTDVTRTWHFGEPSEFERQTATLALKGHIALANIVFPKGTTGYMIDVLARQYLWKYGLDYLHGTGHGVGSFLNVHELPVGIGSREVFNSAPLQAGMVTSNEPGFYEDGHFGYRVENCVYITEVNTENRFAGRTYLGLKDLTLAPHCQKLIDPSLLSPEEVKYLNEYHSEVYTTLSPMLSVSAKKWLSKHTSPI</sequence>
<dbReference type="EC" id="3.4.-.-"/>
<dbReference type="EMBL" id="CU329670">
    <property type="protein sequence ID" value="CAB62423.3"/>
    <property type="molecule type" value="Genomic_DNA"/>
</dbReference>
<dbReference type="PIR" id="T11611">
    <property type="entry name" value="T11611"/>
</dbReference>
<dbReference type="PIR" id="T50297">
    <property type="entry name" value="T50297"/>
</dbReference>
<dbReference type="RefSeq" id="XP_001713044.1">
    <property type="nucleotide sequence ID" value="XM_001712992.2"/>
</dbReference>
<dbReference type="SMR" id="Q09795"/>
<dbReference type="FunCoup" id="Q09795">
    <property type="interactions" value="423"/>
</dbReference>
<dbReference type="STRING" id="284812.Q09795"/>
<dbReference type="MEROPS" id="M24.009"/>
<dbReference type="iPTMnet" id="Q09795"/>
<dbReference type="PaxDb" id="4896-SPAC22G7.01c.1"/>
<dbReference type="EnsemblFungi" id="SPAC22G7.01c.1">
    <property type="protein sequence ID" value="SPAC22G7.01c.1:pep"/>
    <property type="gene ID" value="SPAC22G7.01c"/>
</dbReference>
<dbReference type="PomBase" id="SPAC22G7.01c"/>
<dbReference type="VEuPathDB" id="FungiDB:SPAC22G7.01c"/>
<dbReference type="eggNOG" id="KOG2413">
    <property type="taxonomic scope" value="Eukaryota"/>
</dbReference>
<dbReference type="HOGENOM" id="CLU_011781_2_3_1"/>
<dbReference type="InParanoid" id="Q09795"/>
<dbReference type="OMA" id="EPGMILS"/>
<dbReference type="PhylomeDB" id="Q09795"/>
<dbReference type="PRO" id="PR:Q09795"/>
<dbReference type="Proteomes" id="UP000002485">
    <property type="component" value="Chromosome I"/>
</dbReference>
<dbReference type="GO" id="GO:0005829">
    <property type="term" value="C:cytosol"/>
    <property type="evidence" value="ECO:0007005"/>
    <property type="project" value="PomBase"/>
</dbReference>
<dbReference type="GO" id="GO:0005634">
    <property type="term" value="C:nucleus"/>
    <property type="evidence" value="ECO:0007005"/>
    <property type="project" value="PomBase"/>
</dbReference>
<dbReference type="GO" id="GO:0046872">
    <property type="term" value="F:metal ion binding"/>
    <property type="evidence" value="ECO:0007669"/>
    <property type="project" value="UniProtKB-KW"/>
</dbReference>
<dbReference type="GO" id="GO:0070006">
    <property type="term" value="F:metalloaminopeptidase activity"/>
    <property type="evidence" value="ECO:0007669"/>
    <property type="project" value="InterPro"/>
</dbReference>
<dbReference type="GO" id="GO:0000122">
    <property type="term" value="P:negative regulation of transcription by RNA polymerase II"/>
    <property type="evidence" value="ECO:0000266"/>
    <property type="project" value="PomBase"/>
</dbReference>
<dbReference type="CDD" id="cd01085">
    <property type="entry name" value="APP"/>
    <property type="match status" value="1"/>
</dbReference>
<dbReference type="FunFam" id="3.90.230.10:FF:000007">
    <property type="entry name" value="Xaa-Pro aminopeptidase P"/>
    <property type="match status" value="1"/>
</dbReference>
<dbReference type="FunFam" id="3.40.350.10:FF:000003">
    <property type="entry name" value="Xaa-pro aminopeptidase P"/>
    <property type="match status" value="1"/>
</dbReference>
<dbReference type="Gene3D" id="3.90.230.10">
    <property type="entry name" value="Creatinase/methionine aminopeptidase superfamily"/>
    <property type="match status" value="1"/>
</dbReference>
<dbReference type="Gene3D" id="3.40.350.10">
    <property type="entry name" value="Creatinase/prolidase N-terminal domain"/>
    <property type="match status" value="2"/>
</dbReference>
<dbReference type="InterPro" id="IPR029149">
    <property type="entry name" value="Creatin/AminoP/Spt16_N"/>
</dbReference>
<dbReference type="InterPro" id="IPR036005">
    <property type="entry name" value="Creatinase/aminopeptidase-like"/>
</dbReference>
<dbReference type="InterPro" id="IPR000587">
    <property type="entry name" value="Creatinase_N"/>
</dbReference>
<dbReference type="InterPro" id="IPR000994">
    <property type="entry name" value="Pept_M24"/>
</dbReference>
<dbReference type="InterPro" id="IPR033740">
    <property type="entry name" value="Pept_M24B"/>
</dbReference>
<dbReference type="InterPro" id="IPR032416">
    <property type="entry name" value="Peptidase_M24_C"/>
</dbReference>
<dbReference type="InterPro" id="IPR001131">
    <property type="entry name" value="Peptidase_M24B_aminopep-P_CS"/>
</dbReference>
<dbReference type="InterPro" id="IPR050422">
    <property type="entry name" value="X-Pro_aminopeptidase_P"/>
</dbReference>
<dbReference type="PANTHER" id="PTHR43763">
    <property type="entry name" value="XAA-PRO AMINOPEPTIDASE 1"/>
    <property type="match status" value="1"/>
</dbReference>
<dbReference type="PANTHER" id="PTHR43763:SF6">
    <property type="entry name" value="XAA-PRO AMINOPEPTIDASE 1"/>
    <property type="match status" value="1"/>
</dbReference>
<dbReference type="Pfam" id="PF01321">
    <property type="entry name" value="Creatinase_N"/>
    <property type="match status" value="1"/>
</dbReference>
<dbReference type="Pfam" id="PF16189">
    <property type="entry name" value="Creatinase_N_2"/>
    <property type="match status" value="1"/>
</dbReference>
<dbReference type="Pfam" id="PF00557">
    <property type="entry name" value="Peptidase_M24"/>
    <property type="match status" value="1"/>
</dbReference>
<dbReference type="Pfam" id="PF16188">
    <property type="entry name" value="Peptidase_M24_C"/>
    <property type="match status" value="1"/>
</dbReference>
<dbReference type="SUPFAM" id="SSF55920">
    <property type="entry name" value="Creatinase/aminopeptidase"/>
    <property type="match status" value="1"/>
</dbReference>
<dbReference type="SUPFAM" id="SSF53092">
    <property type="entry name" value="Creatinase/prolidase N-terminal domain"/>
    <property type="match status" value="2"/>
</dbReference>
<dbReference type="PROSITE" id="PS00491">
    <property type="entry name" value="PROLINE_PEPTIDASE"/>
    <property type="match status" value="1"/>
</dbReference>
<protein>
    <recommendedName>
        <fullName>Uncharacterized peptidase C22G7.01c</fullName>
        <ecNumber>3.4.-.-</ecNumber>
    </recommendedName>
</protein>
<organism>
    <name type="scientific">Schizosaccharomyces pombe (strain 972 / ATCC 24843)</name>
    <name type="common">Fission yeast</name>
    <dbReference type="NCBI Taxonomy" id="284812"/>
    <lineage>
        <taxon>Eukaryota</taxon>
        <taxon>Fungi</taxon>
        <taxon>Dikarya</taxon>
        <taxon>Ascomycota</taxon>
        <taxon>Taphrinomycotina</taxon>
        <taxon>Schizosaccharomycetes</taxon>
        <taxon>Schizosaccharomycetales</taxon>
        <taxon>Schizosaccharomycetaceae</taxon>
        <taxon>Schizosaccharomyces</taxon>
    </lineage>
</organism>
<feature type="chain" id="PRO_0000185095" description="Uncharacterized peptidase C22G7.01c">
    <location>
        <begin position="1"/>
        <end position="598"/>
    </location>
</feature>
<feature type="binding site" evidence="1">
    <location>
        <position position="397"/>
    </location>
    <ligand>
        <name>Mn(2+)</name>
        <dbReference type="ChEBI" id="CHEBI:29035"/>
        <label>2</label>
    </ligand>
</feature>
<feature type="binding site" evidence="1">
    <location>
        <position position="408"/>
    </location>
    <ligand>
        <name>Mn(2+)</name>
        <dbReference type="ChEBI" id="CHEBI:29035"/>
        <label>1</label>
    </ligand>
</feature>
<feature type="binding site" evidence="1">
    <location>
        <position position="408"/>
    </location>
    <ligand>
        <name>Mn(2+)</name>
        <dbReference type="ChEBI" id="CHEBI:29035"/>
        <label>2</label>
    </ligand>
</feature>
<feature type="binding site" evidence="1">
    <location>
        <position position="506"/>
    </location>
    <ligand>
        <name>Mn(2+)</name>
        <dbReference type="ChEBI" id="CHEBI:29035"/>
        <label>1</label>
    </ligand>
</feature>
<feature type="binding site" evidence="1">
    <location>
        <position position="520"/>
    </location>
    <ligand>
        <name>Mn(2+)</name>
        <dbReference type="ChEBI" id="CHEBI:29035"/>
        <label>1</label>
    </ligand>
</feature>
<feature type="binding site" evidence="1">
    <location>
        <position position="520"/>
    </location>
    <ligand>
        <name>Mn(2+)</name>
        <dbReference type="ChEBI" id="CHEBI:29035"/>
        <label>2</label>
    </ligand>
</feature>
<comment type="cofactor">
    <cofactor evidence="2">
        <name>Mn(2+)</name>
        <dbReference type="ChEBI" id="CHEBI:29035"/>
    </cofactor>
    <text evidence="2">Binds 2 manganese ions per subunit.</text>
</comment>
<comment type="similarity">
    <text evidence="2">Belongs to the peptidase M24B family.</text>
</comment>